<feature type="chain" id="PRO_0000326964" description="Protoheme IX farnesyltransferase 1">
    <location>
        <begin position="1"/>
        <end position="302"/>
    </location>
</feature>
<feature type="transmembrane region" description="Helical" evidence="1">
    <location>
        <begin position="27"/>
        <end position="47"/>
    </location>
</feature>
<feature type="transmembrane region" description="Helical" evidence="1">
    <location>
        <begin position="49"/>
        <end position="69"/>
    </location>
</feature>
<feature type="transmembrane region" description="Helical" evidence="1">
    <location>
        <begin position="98"/>
        <end position="118"/>
    </location>
</feature>
<feature type="transmembrane region" description="Helical" evidence="1">
    <location>
        <begin position="121"/>
        <end position="141"/>
    </location>
</feature>
<feature type="transmembrane region" description="Helical" evidence="1">
    <location>
        <begin position="149"/>
        <end position="169"/>
    </location>
</feature>
<feature type="transmembrane region" description="Helical" evidence="1">
    <location>
        <begin position="175"/>
        <end position="195"/>
    </location>
</feature>
<feature type="transmembrane region" description="Helical" evidence="1">
    <location>
        <begin position="228"/>
        <end position="248"/>
    </location>
</feature>
<feature type="transmembrane region" description="Helical" evidence="1">
    <location>
        <begin position="281"/>
        <end position="301"/>
    </location>
</feature>
<reference key="1">
    <citation type="journal article" date="2003" name="Lancet">
        <title>Genome sequence of Vibrio parahaemolyticus: a pathogenic mechanism distinct from that of V. cholerae.</title>
        <authorList>
            <person name="Makino K."/>
            <person name="Oshima K."/>
            <person name="Kurokawa K."/>
            <person name="Yokoyama K."/>
            <person name="Uda T."/>
            <person name="Tagomori K."/>
            <person name="Iijima Y."/>
            <person name="Najima M."/>
            <person name="Nakano M."/>
            <person name="Yamashita A."/>
            <person name="Kubota Y."/>
            <person name="Kimura S."/>
            <person name="Yasunaga T."/>
            <person name="Honda T."/>
            <person name="Shinagawa H."/>
            <person name="Hattori M."/>
            <person name="Iida T."/>
        </authorList>
    </citation>
    <scope>NUCLEOTIDE SEQUENCE [LARGE SCALE GENOMIC DNA]</scope>
    <source>
        <strain>RIMD 2210633</strain>
    </source>
</reference>
<proteinExistence type="inferred from homology"/>
<keyword id="KW-0997">Cell inner membrane</keyword>
<keyword id="KW-1003">Cell membrane</keyword>
<keyword id="KW-0350">Heme biosynthesis</keyword>
<keyword id="KW-0472">Membrane</keyword>
<keyword id="KW-0808">Transferase</keyword>
<keyword id="KW-0812">Transmembrane</keyword>
<keyword id="KW-1133">Transmembrane helix</keyword>
<sequence>MSKEIALTLDSRKRLGSTYLKLTKPKVVALMLVTAIVGMSLAPVTDFPWIQASIGLIGIGLMAGSAAAFNHLIDRRIDARMARTHTRPLPSGDTNPLSVAIFAVAIGVVGFVLLYAWVNELTAWMTFLSLLGYAVVYTMYLKRATPQNIVIAGIAGAMPPLLGWTAVTGELHGNAWLLVMIIFIWTPPHFWALAIHRVEDYRKVDIPMLPVTHGIEYTKTSILLYTVLLTLVCVMPVLVGMVGFIYLFSALLLNAGFIYHAWKLKFAPEPNSAIETFKFSIYHLLALFVALLADHYIGMVLQ</sequence>
<protein>
    <recommendedName>
        <fullName evidence="1">Protoheme IX farnesyltransferase 1</fullName>
        <ecNumber evidence="1">2.5.1.141</ecNumber>
    </recommendedName>
    <alternativeName>
        <fullName evidence="1">Heme B farnesyltransferase 1</fullName>
    </alternativeName>
    <alternativeName>
        <fullName evidence="1">Heme O synthase 1</fullName>
    </alternativeName>
</protein>
<gene>
    <name evidence="1" type="primary">cyoE1</name>
    <name type="ordered locus">VPA0544</name>
</gene>
<organism>
    <name type="scientific">Vibrio parahaemolyticus serotype O3:K6 (strain RIMD 2210633)</name>
    <dbReference type="NCBI Taxonomy" id="223926"/>
    <lineage>
        <taxon>Bacteria</taxon>
        <taxon>Pseudomonadati</taxon>
        <taxon>Pseudomonadota</taxon>
        <taxon>Gammaproteobacteria</taxon>
        <taxon>Vibrionales</taxon>
        <taxon>Vibrionaceae</taxon>
        <taxon>Vibrio</taxon>
    </lineage>
</organism>
<comment type="function">
    <text evidence="1">Converts heme B (protoheme IX) to heme O by substitution of the vinyl group on carbon 2 of heme B porphyrin ring with a hydroxyethyl farnesyl side group.</text>
</comment>
<comment type="catalytic activity">
    <reaction evidence="1">
        <text>heme b + (2E,6E)-farnesyl diphosphate + H2O = Fe(II)-heme o + diphosphate</text>
        <dbReference type="Rhea" id="RHEA:28070"/>
        <dbReference type="ChEBI" id="CHEBI:15377"/>
        <dbReference type="ChEBI" id="CHEBI:33019"/>
        <dbReference type="ChEBI" id="CHEBI:60344"/>
        <dbReference type="ChEBI" id="CHEBI:60530"/>
        <dbReference type="ChEBI" id="CHEBI:175763"/>
        <dbReference type="EC" id="2.5.1.141"/>
    </reaction>
</comment>
<comment type="pathway">
    <text evidence="1">Porphyrin-containing compound metabolism; heme O biosynthesis; heme O from protoheme: step 1/1.</text>
</comment>
<comment type="subcellular location">
    <subcellularLocation>
        <location evidence="1">Cell inner membrane</location>
        <topology evidence="1">Multi-pass membrane protein</topology>
    </subcellularLocation>
</comment>
<comment type="miscellaneous">
    <text evidence="1">Carbon 2 of the heme B porphyrin ring is defined according to the Fischer nomenclature.</text>
</comment>
<comment type="similarity">
    <text evidence="1">Belongs to the UbiA prenyltransferase family. Protoheme IX farnesyltransferase subfamily.</text>
</comment>
<dbReference type="EC" id="2.5.1.141" evidence="1"/>
<dbReference type="EMBL" id="BA000032">
    <property type="protein sequence ID" value="BAC61887.1"/>
    <property type="molecule type" value="Genomic_DNA"/>
</dbReference>
<dbReference type="RefSeq" id="NP_800054.1">
    <property type="nucleotide sequence ID" value="NC_004605.1"/>
</dbReference>
<dbReference type="SMR" id="Q87IR2"/>
<dbReference type="GeneID" id="1191232"/>
<dbReference type="KEGG" id="vpa:VPA0544"/>
<dbReference type="PATRIC" id="fig|223926.6.peg.3485"/>
<dbReference type="eggNOG" id="COG0109">
    <property type="taxonomic scope" value="Bacteria"/>
</dbReference>
<dbReference type="HOGENOM" id="CLU_029631_0_2_6"/>
<dbReference type="UniPathway" id="UPA00834">
    <property type="reaction ID" value="UER00712"/>
</dbReference>
<dbReference type="Proteomes" id="UP000002493">
    <property type="component" value="Chromosome 2"/>
</dbReference>
<dbReference type="GO" id="GO:0005886">
    <property type="term" value="C:plasma membrane"/>
    <property type="evidence" value="ECO:0007669"/>
    <property type="project" value="UniProtKB-SubCell"/>
</dbReference>
<dbReference type="GO" id="GO:0008495">
    <property type="term" value="F:protoheme IX farnesyltransferase activity"/>
    <property type="evidence" value="ECO:0007669"/>
    <property type="project" value="UniProtKB-UniRule"/>
</dbReference>
<dbReference type="GO" id="GO:0048034">
    <property type="term" value="P:heme O biosynthetic process"/>
    <property type="evidence" value="ECO:0007669"/>
    <property type="project" value="UniProtKB-UniRule"/>
</dbReference>
<dbReference type="CDD" id="cd13957">
    <property type="entry name" value="PT_UbiA_Cox10"/>
    <property type="match status" value="1"/>
</dbReference>
<dbReference type="FunFam" id="1.10.357.140:FF:000001">
    <property type="entry name" value="Protoheme IX farnesyltransferase"/>
    <property type="match status" value="1"/>
</dbReference>
<dbReference type="Gene3D" id="1.10.357.140">
    <property type="entry name" value="UbiA prenyltransferase"/>
    <property type="match status" value="1"/>
</dbReference>
<dbReference type="HAMAP" id="MF_00154">
    <property type="entry name" value="CyoE_CtaB"/>
    <property type="match status" value="1"/>
</dbReference>
<dbReference type="InterPro" id="IPR006369">
    <property type="entry name" value="Protohaem_IX_farnesylTrfase"/>
</dbReference>
<dbReference type="InterPro" id="IPR000537">
    <property type="entry name" value="UbiA_prenyltransferase"/>
</dbReference>
<dbReference type="InterPro" id="IPR030470">
    <property type="entry name" value="UbiA_prenylTrfase_CS"/>
</dbReference>
<dbReference type="InterPro" id="IPR044878">
    <property type="entry name" value="UbiA_sf"/>
</dbReference>
<dbReference type="NCBIfam" id="TIGR01473">
    <property type="entry name" value="cyoE_ctaB"/>
    <property type="match status" value="1"/>
</dbReference>
<dbReference type="NCBIfam" id="NF003349">
    <property type="entry name" value="PRK04375.1-2"/>
    <property type="match status" value="1"/>
</dbReference>
<dbReference type="PANTHER" id="PTHR43448:SF7">
    <property type="entry name" value="4-HYDROXYBENZOATE SOLANESYLTRANSFERASE"/>
    <property type="match status" value="1"/>
</dbReference>
<dbReference type="PANTHER" id="PTHR43448">
    <property type="entry name" value="PROTOHEME IX FARNESYLTRANSFERASE, MITOCHONDRIAL"/>
    <property type="match status" value="1"/>
</dbReference>
<dbReference type="Pfam" id="PF01040">
    <property type="entry name" value="UbiA"/>
    <property type="match status" value="1"/>
</dbReference>
<dbReference type="PROSITE" id="PS00943">
    <property type="entry name" value="UBIA"/>
    <property type="match status" value="1"/>
</dbReference>
<name>CYOE1_VIBPA</name>
<accession>Q87IR2</accession>
<evidence type="ECO:0000255" key="1">
    <source>
        <dbReference type="HAMAP-Rule" id="MF_00154"/>
    </source>
</evidence>